<dbReference type="EC" id="1.1.1.47" evidence="1"/>
<dbReference type="EMBL" id="AY596297">
    <property type="protein sequence ID" value="AAV45891.1"/>
    <property type="status" value="ALT_INIT"/>
    <property type="molecule type" value="Genomic_DNA"/>
</dbReference>
<dbReference type="RefSeq" id="WP_049938835.1">
    <property type="nucleotide sequence ID" value="NC_006396.1"/>
</dbReference>
<dbReference type="SMR" id="Q5V3L1"/>
<dbReference type="STRING" id="272569.rrnAC0917"/>
<dbReference type="PaxDb" id="272569-rrnAC0917"/>
<dbReference type="EnsemblBacteria" id="AAV45891">
    <property type="protein sequence ID" value="AAV45891"/>
    <property type="gene ID" value="rrnAC0917"/>
</dbReference>
<dbReference type="GeneID" id="40151936"/>
<dbReference type="KEGG" id="hma:rrnAC0917"/>
<dbReference type="PATRIC" id="fig|272569.17.peg.1651"/>
<dbReference type="eggNOG" id="arCOG01459">
    <property type="taxonomic scope" value="Archaea"/>
</dbReference>
<dbReference type="HOGENOM" id="CLU_026673_1_0_2"/>
<dbReference type="Proteomes" id="UP000001169">
    <property type="component" value="Chromosome I"/>
</dbReference>
<dbReference type="GO" id="GO:0005536">
    <property type="term" value="F:D-glucose binding"/>
    <property type="evidence" value="ECO:0007669"/>
    <property type="project" value="UniProtKB-UniRule"/>
</dbReference>
<dbReference type="GO" id="GO:0047934">
    <property type="term" value="F:glucose 1-dehydrogenase (NAD+) activity"/>
    <property type="evidence" value="ECO:0007669"/>
    <property type="project" value="RHEA"/>
</dbReference>
<dbReference type="GO" id="GO:0047935">
    <property type="term" value="F:glucose 1-dehydrogenase (NADP+) activity"/>
    <property type="evidence" value="ECO:0007669"/>
    <property type="project" value="RHEA"/>
</dbReference>
<dbReference type="GO" id="GO:0070403">
    <property type="term" value="F:NAD+ binding"/>
    <property type="evidence" value="ECO:0007669"/>
    <property type="project" value="UniProtKB-UniRule"/>
</dbReference>
<dbReference type="GO" id="GO:0070401">
    <property type="term" value="F:NADP+ binding"/>
    <property type="evidence" value="ECO:0007669"/>
    <property type="project" value="UniProtKB-UniRule"/>
</dbReference>
<dbReference type="GO" id="GO:0008270">
    <property type="term" value="F:zinc ion binding"/>
    <property type="evidence" value="ECO:0007669"/>
    <property type="project" value="UniProtKB-UniRule"/>
</dbReference>
<dbReference type="GO" id="GO:0019595">
    <property type="term" value="P:non-phosphorylated glucose catabolic process"/>
    <property type="evidence" value="ECO:0007669"/>
    <property type="project" value="UniProtKB-UniRule"/>
</dbReference>
<dbReference type="CDD" id="cd08230">
    <property type="entry name" value="glucose_DH"/>
    <property type="match status" value="1"/>
</dbReference>
<dbReference type="Gene3D" id="3.90.180.10">
    <property type="entry name" value="Medium-chain alcohol dehydrogenases, catalytic domain"/>
    <property type="match status" value="1"/>
</dbReference>
<dbReference type="Gene3D" id="3.40.50.720">
    <property type="entry name" value="NAD(P)-binding Rossmann-like Domain"/>
    <property type="match status" value="1"/>
</dbReference>
<dbReference type="HAMAP" id="MF_02127">
    <property type="entry name" value="Glucose_DH"/>
    <property type="match status" value="1"/>
</dbReference>
<dbReference type="InterPro" id="IPR013154">
    <property type="entry name" value="ADH-like_N"/>
</dbReference>
<dbReference type="InterPro" id="IPR026583">
    <property type="entry name" value="Glc_1-DH_arc"/>
</dbReference>
<dbReference type="InterPro" id="IPR031640">
    <property type="entry name" value="Glu_dehyd_C"/>
</dbReference>
<dbReference type="InterPro" id="IPR011032">
    <property type="entry name" value="GroES-like_sf"/>
</dbReference>
<dbReference type="InterPro" id="IPR036291">
    <property type="entry name" value="NAD(P)-bd_dom_sf"/>
</dbReference>
<dbReference type="PANTHER" id="PTHR43189:SF2">
    <property type="entry name" value="GLUCOSE 1-DEHYDROGENASE"/>
    <property type="match status" value="1"/>
</dbReference>
<dbReference type="PANTHER" id="PTHR43189">
    <property type="entry name" value="ZINC-TYPE ALCOHOL DEHYDROGENASE-LIKE PROTEIN C1198.01-RELATED"/>
    <property type="match status" value="1"/>
</dbReference>
<dbReference type="Pfam" id="PF08240">
    <property type="entry name" value="ADH_N"/>
    <property type="match status" value="1"/>
</dbReference>
<dbReference type="Pfam" id="PF16912">
    <property type="entry name" value="Glu_dehyd_C"/>
    <property type="match status" value="1"/>
</dbReference>
<dbReference type="SUPFAM" id="SSF50129">
    <property type="entry name" value="GroES-like"/>
    <property type="match status" value="1"/>
</dbReference>
<dbReference type="SUPFAM" id="SSF51735">
    <property type="entry name" value="NAD(P)-binding Rossmann-fold domains"/>
    <property type="match status" value="1"/>
</dbReference>
<proteinExistence type="inferred from homology"/>
<reference key="1">
    <citation type="journal article" date="2004" name="Genome Res.">
        <title>Genome sequence of Haloarcula marismortui: a halophilic archaeon from the Dead Sea.</title>
        <authorList>
            <person name="Baliga N.S."/>
            <person name="Bonneau R."/>
            <person name="Facciotti M.T."/>
            <person name="Pan M."/>
            <person name="Glusman G."/>
            <person name="Deutsch E.W."/>
            <person name="Shannon P."/>
            <person name="Chiu Y."/>
            <person name="Weng R.S."/>
            <person name="Gan R.R."/>
            <person name="Hung P."/>
            <person name="Date S.V."/>
            <person name="Marcotte E."/>
            <person name="Hood L."/>
            <person name="Ng W.V."/>
        </authorList>
    </citation>
    <scope>NUCLEOTIDE SEQUENCE [LARGE SCALE GENOMIC DNA]</scope>
    <source>
        <strain>ATCC 43049 / DSM 3752 / JCM 8966 / VKM B-1809</strain>
    </source>
</reference>
<comment type="function">
    <text evidence="1">Catalyzes the NAD(P)(+)-dependent oxidation of D-glucose to D-gluconate via gluconolactone. Can utilize both NAD(+) and NADP(+) as electron acceptor. Is involved in the degradation of glucose through a modified Entner-Doudoroff pathway.</text>
</comment>
<comment type="catalytic activity">
    <reaction evidence="1">
        <text>D-glucose + NAD(+) = D-glucono-1,5-lactone + NADH + H(+)</text>
        <dbReference type="Rhea" id="RHEA:14293"/>
        <dbReference type="ChEBI" id="CHEBI:4167"/>
        <dbReference type="ChEBI" id="CHEBI:15378"/>
        <dbReference type="ChEBI" id="CHEBI:16217"/>
        <dbReference type="ChEBI" id="CHEBI:57540"/>
        <dbReference type="ChEBI" id="CHEBI:57945"/>
        <dbReference type="EC" id="1.1.1.47"/>
    </reaction>
</comment>
<comment type="catalytic activity">
    <reaction evidence="1">
        <text>D-glucose + NADP(+) = D-glucono-1,5-lactone + NADPH + H(+)</text>
        <dbReference type="Rhea" id="RHEA:14405"/>
        <dbReference type="ChEBI" id="CHEBI:4167"/>
        <dbReference type="ChEBI" id="CHEBI:15378"/>
        <dbReference type="ChEBI" id="CHEBI:16217"/>
        <dbReference type="ChEBI" id="CHEBI:57783"/>
        <dbReference type="ChEBI" id="CHEBI:58349"/>
        <dbReference type="EC" id="1.1.1.47"/>
    </reaction>
</comment>
<comment type="cofactor">
    <cofactor evidence="1">
        <name>Zn(2+)</name>
        <dbReference type="ChEBI" id="CHEBI:29105"/>
    </cofactor>
</comment>
<comment type="similarity">
    <text evidence="1">Belongs to the zinc-containing alcohol dehydrogenase family. Glucose 1-dehydrogenase subfamily.</text>
</comment>
<comment type="sequence caution" evidence="3">
    <conflict type="erroneous initiation">
        <sequence resource="EMBL-CDS" id="AAV45891"/>
    </conflict>
    <text>Extended N-terminus.</text>
</comment>
<gene>
    <name evidence="1" type="primary">gdh</name>
    <name type="ordered locus">rrnAC0917</name>
</gene>
<keyword id="KW-0119">Carbohydrate metabolism</keyword>
<keyword id="KW-0479">Metal-binding</keyword>
<keyword id="KW-0520">NAD</keyword>
<keyword id="KW-0521">NADP</keyword>
<keyword id="KW-0547">Nucleotide-binding</keyword>
<keyword id="KW-0560">Oxidoreductase</keyword>
<keyword id="KW-1185">Reference proteome</keyword>
<keyword id="KW-0862">Zinc</keyword>
<accession>Q5V3L1</accession>
<protein>
    <recommendedName>
        <fullName evidence="1">Glucose 1-dehydrogenase</fullName>
        <shortName evidence="1">GDH</shortName>
        <shortName evidence="1">GlcDH</shortName>
        <ecNumber evidence="1">1.1.1.47</ecNumber>
    </recommendedName>
</protein>
<organism>
    <name type="scientific">Haloarcula marismortui (strain ATCC 43049 / DSM 3752 / JCM 8966 / VKM B-1809)</name>
    <name type="common">Halobacterium marismortui</name>
    <dbReference type="NCBI Taxonomy" id="272569"/>
    <lineage>
        <taxon>Archaea</taxon>
        <taxon>Methanobacteriati</taxon>
        <taxon>Methanobacteriota</taxon>
        <taxon>Stenosarchaea group</taxon>
        <taxon>Halobacteria</taxon>
        <taxon>Halobacteriales</taxon>
        <taxon>Haloarculaceae</taxon>
        <taxon>Haloarcula</taxon>
    </lineage>
</organism>
<sequence>MKVIGVTRDDDGPQLLERERPSPDPGEALVRTLRVGVDGTDHEVLNGSHGGFPDGADHMILGHEAVGVVEEPNGTGLEAGQVVAPTVRRKPNGETNEYFRRGEPDMAPDGEYTERGIVGDHGFMAEYFTSPADFLVPVPKSVAEYGFLVEPLSITEKANEHAYATREPFDWRPDSACVLGNGSLGLLTLWMLDQEYDRTYCVGRRDRPDPTVDIIDEIGSTYVDSRETPVDELPGAYEAMDYIYEATGFAPHAFQTVKALDQNGVGVLLGIPEPWEFEVDGGSLHNEIVLHNKCLIGTVNSHVSHFEDAVETLQELPAWLLDDLVTTVTDPEHVEAAFEDGDDQIKAVVEFDSL</sequence>
<feature type="chain" id="PRO_0000414830" description="Glucose 1-dehydrogenase">
    <location>
        <begin position="1"/>
        <end position="354"/>
    </location>
</feature>
<feature type="region of interest" description="Disordered" evidence="2">
    <location>
        <begin position="1"/>
        <end position="27"/>
    </location>
</feature>
<feature type="region of interest" description="Disordered" evidence="2">
    <location>
        <begin position="91"/>
        <end position="110"/>
    </location>
</feature>
<feature type="compositionally biased region" description="Basic and acidic residues" evidence="2">
    <location>
        <begin position="7"/>
        <end position="22"/>
    </location>
</feature>
<feature type="binding site" evidence="1">
    <location>
        <position position="38"/>
    </location>
    <ligand>
        <name>Zn(2+)</name>
        <dbReference type="ChEBI" id="CHEBI:29105"/>
        <note>catalytic</note>
    </ligand>
</feature>
<feature type="binding site" evidence="1">
    <location>
        <position position="40"/>
    </location>
    <ligand>
        <name>substrate</name>
    </ligand>
</feature>
<feature type="binding site" evidence="1">
    <location>
        <position position="63"/>
    </location>
    <ligand>
        <name>Zn(2+)</name>
        <dbReference type="ChEBI" id="CHEBI:29105"/>
        <note>catalytic</note>
    </ligand>
</feature>
<feature type="binding site" evidence="1">
    <location>
        <position position="64"/>
    </location>
    <ligand>
        <name>Zn(2+)</name>
        <dbReference type="ChEBI" id="CHEBI:29105"/>
        <note>catalytic</note>
    </ligand>
</feature>
<feature type="binding site" evidence="1">
    <location>
        <position position="114"/>
    </location>
    <ligand>
        <name>substrate</name>
    </ligand>
</feature>
<feature type="binding site" evidence="1">
    <location>
        <position position="150"/>
    </location>
    <ligand>
        <name>substrate</name>
    </ligand>
</feature>
<feature type="binding site" evidence="1">
    <location>
        <position position="150"/>
    </location>
    <ligand>
        <name>Zn(2+)</name>
        <dbReference type="ChEBI" id="CHEBI:29105"/>
        <note>catalytic</note>
    </ligand>
</feature>
<feature type="binding site" evidence="1">
    <location>
        <begin position="181"/>
        <end position="184"/>
    </location>
    <ligand>
        <name>NADP(+)</name>
        <dbReference type="ChEBI" id="CHEBI:58349"/>
    </ligand>
</feature>
<feature type="binding site" evidence="1">
    <location>
        <begin position="204"/>
        <end position="205"/>
    </location>
    <ligand>
        <name>NADP(+)</name>
        <dbReference type="ChEBI" id="CHEBI:58349"/>
    </ligand>
</feature>
<feature type="binding site" evidence="1">
    <location>
        <begin position="269"/>
        <end position="271"/>
    </location>
    <ligand>
        <name>NADP(+)</name>
        <dbReference type="ChEBI" id="CHEBI:58349"/>
    </ligand>
</feature>
<feature type="binding site" evidence="1">
    <location>
        <begin position="298"/>
        <end position="300"/>
    </location>
    <ligand>
        <name>NADP(+)</name>
        <dbReference type="ChEBI" id="CHEBI:58349"/>
    </ligand>
</feature>
<feature type="binding site" evidence="1">
    <location>
        <position position="300"/>
    </location>
    <ligand>
        <name>substrate</name>
    </ligand>
</feature>
<evidence type="ECO:0000255" key="1">
    <source>
        <dbReference type="HAMAP-Rule" id="MF_02127"/>
    </source>
</evidence>
<evidence type="ECO:0000256" key="2">
    <source>
        <dbReference type="SAM" id="MobiDB-lite"/>
    </source>
</evidence>
<evidence type="ECO:0000305" key="3"/>
<name>GLCDH_HALMA</name>